<sequence>MAVPKKKTSRARRDRRRSHHALRGPGMVACPNCGEMRLPHRVCPECGYYKGRTVVAVEAVE</sequence>
<keyword id="KW-1185">Reference proteome</keyword>
<keyword id="KW-0687">Ribonucleoprotein</keyword>
<keyword id="KW-0689">Ribosomal protein</keyword>
<name>RL32_RUBXD</name>
<protein>
    <recommendedName>
        <fullName evidence="1">Large ribosomal subunit protein bL32</fullName>
    </recommendedName>
    <alternativeName>
        <fullName evidence="3">50S ribosomal protein L32</fullName>
    </alternativeName>
</protein>
<accession>Q1AW89</accession>
<gene>
    <name evidence="1" type="primary">rpmF</name>
    <name type="ordered locus">Rxyl_1376</name>
</gene>
<reference key="1">
    <citation type="submission" date="2006-06" db="EMBL/GenBank/DDBJ databases">
        <title>Complete sequence of Rubrobacter xylanophilus DSM 9941.</title>
        <authorList>
            <consortium name="US DOE Joint Genome Institute"/>
            <person name="Copeland A."/>
            <person name="Lucas S."/>
            <person name="Lapidus A."/>
            <person name="Barry K."/>
            <person name="Detter J.C."/>
            <person name="Glavina del Rio T."/>
            <person name="Hammon N."/>
            <person name="Israni S."/>
            <person name="Dalin E."/>
            <person name="Tice H."/>
            <person name="Pitluck S."/>
            <person name="Munk A.C."/>
            <person name="Brettin T."/>
            <person name="Bruce D."/>
            <person name="Han C."/>
            <person name="Tapia R."/>
            <person name="Gilna P."/>
            <person name="Schmutz J."/>
            <person name="Larimer F."/>
            <person name="Land M."/>
            <person name="Hauser L."/>
            <person name="Kyrpides N."/>
            <person name="Lykidis A."/>
            <person name="da Costa M.S."/>
            <person name="Rainey F.A."/>
            <person name="Empadinhas N."/>
            <person name="Jolivet E."/>
            <person name="Battista J.R."/>
            <person name="Richardson P."/>
        </authorList>
    </citation>
    <scope>NUCLEOTIDE SEQUENCE [LARGE SCALE GENOMIC DNA]</scope>
    <source>
        <strain>DSM 9941 / JCM 11954 / NBRC 16129 / PRD-1</strain>
    </source>
</reference>
<dbReference type="EMBL" id="CP000386">
    <property type="protein sequence ID" value="ABG04339.1"/>
    <property type="molecule type" value="Genomic_DNA"/>
</dbReference>
<dbReference type="RefSeq" id="WP_011564356.1">
    <property type="nucleotide sequence ID" value="NC_008148.1"/>
</dbReference>
<dbReference type="SMR" id="Q1AW89"/>
<dbReference type="STRING" id="266117.Rxyl_1376"/>
<dbReference type="KEGG" id="rxy:Rxyl_1376"/>
<dbReference type="eggNOG" id="COG0333">
    <property type="taxonomic scope" value="Bacteria"/>
</dbReference>
<dbReference type="HOGENOM" id="CLU_129084_1_3_11"/>
<dbReference type="OrthoDB" id="9807363at2"/>
<dbReference type="PhylomeDB" id="Q1AW89"/>
<dbReference type="Proteomes" id="UP000006637">
    <property type="component" value="Chromosome"/>
</dbReference>
<dbReference type="GO" id="GO:0015934">
    <property type="term" value="C:large ribosomal subunit"/>
    <property type="evidence" value="ECO:0007669"/>
    <property type="project" value="InterPro"/>
</dbReference>
<dbReference type="GO" id="GO:0003735">
    <property type="term" value="F:structural constituent of ribosome"/>
    <property type="evidence" value="ECO:0007669"/>
    <property type="project" value="InterPro"/>
</dbReference>
<dbReference type="GO" id="GO:0006412">
    <property type="term" value="P:translation"/>
    <property type="evidence" value="ECO:0007669"/>
    <property type="project" value="UniProtKB-UniRule"/>
</dbReference>
<dbReference type="Gene3D" id="1.20.5.640">
    <property type="entry name" value="Single helix bin"/>
    <property type="match status" value="1"/>
</dbReference>
<dbReference type="HAMAP" id="MF_00340">
    <property type="entry name" value="Ribosomal_bL32"/>
    <property type="match status" value="1"/>
</dbReference>
<dbReference type="InterPro" id="IPR002677">
    <property type="entry name" value="Ribosomal_bL32"/>
</dbReference>
<dbReference type="InterPro" id="IPR044957">
    <property type="entry name" value="Ribosomal_bL32_bact"/>
</dbReference>
<dbReference type="InterPro" id="IPR011332">
    <property type="entry name" value="Ribosomal_zn-bd"/>
</dbReference>
<dbReference type="NCBIfam" id="TIGR01031">
    <property type="entry name" value="rpmF_bact"/>
    <property type="match status" value="1"/>
</dbReference>
<dbReference type="PANTHER" id="PTHR35534">
    <property type="entry name" value="50S RIBOSOMAL PROTEIN L32"/>
    <property type="match status" value="1"/>
</dbReference>
<dbReference type="PANTHER" id="PTHR35534:SF1">
    <property type="entry name" value="LARGE RIBOSOMAL SUBUNIT PROTEIN BL32"/>
    <property type="match status" value="1"/>
</dbReference>
<dbReference type="Pfam" id="PF01783">
    <property type="entry name" value="Ribosomal_L32p"/>
    <property type="match status" value="1"/>
</dbReference>
<dbReference type="SUPFAM" id="SSF57829">
    <property type="entry name" value="Zn-binding ribosomal proteins"/>
    <property type="match status" value="1"/>
</dbReference>
<evidence type="ECO:0000255" key="1">
    <source>
        <dbReference type="HAMAP-Rule" id="MF_00340"/>
    </source>
</evidence>
<evidence type="ECO:0000256" key="2">
    <source>
        <dbReference type="SAM" id="MobiDB-lite"/>
    </source>
</evidence>
<evidence type="ECO:0000305" key="3"/>
<organism>
    <name type="scientific">Rubrobacter xylanophilus (strain DSM 9941 / JCM 11954 / NBRC 16129 / PRD-1)</name>
    <dbReference type="NCBI Taxonomy" id="266117"/>
    <lineage>
        <taxon>Bacteria</taxon>
        <taxon>Bacillati</taxon>
        <taxon>Actinomycetota</taxon>
        <taxon>Rubrobacteria</taxon>
        <taxon>Rubrobacterales</taxon>
        <taxon>Rubrobacteraceae</taxon>
        <taxon>Rubrobacter</taxon>
    </lineage>
</organism>
<proteinExistence type="inferred from homology"/>
<feature type="chain" id="PRO_0000296552" description="Large ribosomal subunit protein bL32">
    <location>
        <begin position="1"/>
        <end position="61"/>
    </location>
</feature>
<feature type="region of interest" description="Disordered" evidence="2">
    <location>
        <begin position="1"/>
        <end position="24"/>
    </location>
</feature>
<feature type="compositionally biased region" description="Basic residues" evidence="2">
    <location>
        <begin position="1"/>
        <end position="22"/>
    </location>
</feature>
<comment type="similarity">
    <text evidence="1">Belongs to the bacterial ribosomal protein bL32 family.</text>
</comment>